<dbReference type="EC" id="4.2.3.87"/>
<dbReference type="EC" id="4.2.3.93"/>
<dbReference type="EMBL" id="GU083697">
    <property type="protein sequence ID" value="ACY38195.1"/>
    <property type="molecule type" value="mRNA"/>
</dbReference>
<dbReference type="SMR" id="D0VMR6"/>
<dbReference type="KEGG" id="ag:ACY38195"/>
<dbReference type="BioCyc" id="MetaCyc:MONOMER-16036"/>
<dbReference type="BRENDA" id="4.2.3.93">
    <property type="organism ID" value="12561"/>
</dbReference>
<dbReference type="UniPathway" id="UPA00213"/>
<dbReference type="GO" id="GO:0000287">
    <property type="term" value="F:magnesium ion binding"/>
    <property type="evidence" value="ECO:0007669"/>
    <property type="project" value="InterPro"/>
</dbReference>
<dbReference type="GO" id="GO:0010334">
    <property type="term" value="F:sesquiterpene synthase activity"/>
    <property type="evidence" value="ECO:0000314"/>
    <property type="project" value="UniProtKB"/>
</dbReference>
<dbReference type="GO" id="GO:0016102">
    <property type="term" value="P:diterpenoid biosynthetic process"/>
    <property type="evidence" value="ECO:0007669"/>
    <property type="project" value="InterPro"/>
</dbReference>
<dbReference type="GO" id="GO:0045338">
    <property type="term" value="P:farnesyl diphosphate metabolic process"/>
    <property type="evidence" value="ECO:0000314"/>
    <property type="project" value="UniProtKB"/>
</dbReference>
<dbReference type="GO" id="GO:0009753">
    <property type="term" value="P:response to jasmonic acid"/>
    <property type="evidence" value="ECO:0000314"/>
    <property type="project" value="UniProtKB"/>
</dbReference>
<dbReference type="GO" id="GO:0051762">
    <property type="term" value="P:sesquiterpene biosynthetic process"/>
    <property type="evidence" value="ECO:0000314"/>
    <property type="project" value="UniProtKB"/>
</dbReference>
<dbReference type="CDD" id="cd00684">
    <property type="entry name" value="Terpene_cyclase_plant_C1"/>
    <property type="match status" value="1"/>
</dbReference>
<dbReference type="FunFam" id="1.10.600.10:FF:000007">
    <property type="entry name" value="Isoprene synthase, chloroplastic"/>
    <property type="match status" value="1"/>
</dbReference>
<dbReference type="Gene3D" id="1.10.600.10">
    <property type="entry name" value="Farnesyl Diphosphate Synthase"/>
    <property type="match status" value="1"/>
</dbReference>
<dbReference type="Gene3D" id="1.50.10.130">
    <property type="entry name" value="Terpene synthase, N-terminal domain"/>
    <property type="match status" value="1"/>
</dbReference>
<dbReference type="InterPro" id="IPR008949">
    <property type="entry name" value="Isoprenoid_synthase_dom_sf"/>
</dbReference>
<dbReference type="InterPro" id="IPR034741">
    <property type="entry name" value="Terpene_cyclase-like_1_C"/>
</dbReference>
<dbReference type="InterPro" id="IPR044814">
    <property type="entry name" value="Terpene_cyclase_plant_C1"/>
</dbReference>
<dbReference type="InterPro" id="IPR001906">
    <property type="entry name" value="Terpene_synth_N"/>
</dbReference>
<dbReference type="InterPro" id="IPR036965">
    <property type="entry name" value="Terpene_synth_N_sf"/>
</dbReference>
<dbReference type="InterPro" id="IPR050148">
    <property type="entry name" value="Terpene_synthase-like"/>
</dbReference>
<dbReference type="InterPro" id="IPR005630">
    <property type="entry name" value="Terpene_synthase_metal-bd"/>
</dbReference>
<dbReference type="InterPro" id="IPR008930">
    <property type="entry name" value="Terpenoid_cyclase/PrenylTrfase"/>
</dbReference>
<dbReference type="PANTHER" id="PTHR31225:SF251">
    <property type="entry name" value="(-)-GERMACRENE D SYNTHASE-LIKE ISOFORM X2"/>
    <property type="match status" value="1"/>
</dbReference>
<dbReference type="PANTHER" id="PTHR31225">
    <property type="entry name" value="OS04G0344100 PROTEIN-RELATED"/>
    <property type="match status" value="1"/>
</dbReference>
<dbReference type="Pfam" id="PF01397">
    <property type="entry name" value="Terpene_synth"/>
    <property type="match status" value="1"/>
</dbReference>
<dbReference type="Pfam" id="PF03936">
    <property type="entry name" value="Terpene_synth_C"/>
    <property type="match status" value="1"/>
</dbReference>
<dbReference type="SFLD" id="SFLDS00005">
    <property type="entry name" value="Isoprenoid_Synthase_Type_I"/>
    <property type="match status" value="1"/>
</dbReference>
<dbReference type="SFLD" id="SFLDG01019">
    <property type="entry name" value="Terpene_Cyclase_Like_1_C_Termi"/>
    <property type="match status" value="1"/>
</dbReference>
<dbReference type="SUPFAM" id="SSF48239">
    <property type="entry name" value="Terpenoid cyclases/Protein prenyltransferases"/>
    <property type="match status" value="1"/>
</dbReference>
<dbReference type="SUPFAM" id="SSF48576">
    <property type="entry name" value="Terpenoid synthases"/>
    <property type="match status" value="1"/>
</dbReference>
<comment type="function">
    <text evidence="2">Sesquiterpene synthase involved in the biosynthesis of delta-guaiene (81.2%) and alpha-guaiene (18.1%), two structures composed of five- and seven-membered rings. Also produces 0.7% of alpha-humulene.</text>
</comment>
<comment type="catalytic activity">
    <reaction evidence="2">
        <text>(2E,6E)-farnesyl diphosphate = delta-guaiene + diphosphate</text>
        <dbReference type="Rhea" id="RHEA:31831"/>
        <dbReference type="ChEBI" id="CHEBI:33019"/>
        <dbReference type="ChEBI" id="CHEBI:63447"/>
        <dbReference type="ChEBI" id="CHEBI:175763"/>
        <dbReference type="EC" id="4.2.3.93"/>
    </reaction>
</comment>
<comment type="catalytic activity">
    <reaction evidence="2">
        <text>(2E,6E)-farnesyl diphosphate = alpha-guaiene + diphosphate</text>
        <dbReference type="Rhea" id="RHEA:31807"/>
        <dbReference type="ChEBI" id="CHEBI:33019"/>
        <dbReference type="ChEBI" id="CHEBI:63443"/>
        <dbReference type="ChEBI" id="CHEBI:175763"/>
        <dbReference type="EC" id="4.2.3.87"/>
    </reaction>
</comment>
<comment type="cofactor">
    <cofactor evidence="1">
        <name>Mg(2+)</name>
        <dbReference type="ChEBI" id="CHEBI:18420"/>
    </cofactor>
    <text evidence="1">Binds 3 Mg(2+) ions per subunit.</text>
</comment>
<comment type="biophysicochemical properties">
    <kinetics>
        <KM evidence="2">2.71 uM for farnesyl diphosphate</KM>
        <text>kcat is 4.99 x 10(-3) sec(-1) for farnesyl diphosphate.</text>
    </kinetics>
</comment>
<comment type="pathway">
    <text>Secondary metabolite biosynthesis; terpenoid biosynthesis.</text>
</comment>
<comment type="induction">
    <text evidence="2">Up-regulated by methyl jasmonate.</text>
</comment>
<comment type="domain">
    <text evidence="1">The Asp-Asp-Xaa-Xaa-Asp/Glu (DDXXD/E) motif is important for the catalytic activity, presumably through binding to Mg(2+).</text>
</comment>
<comment type="similarity">
    <text evidence="3">Belongs to the terpene synthase family.</text>
</comment>
<gene>
    <name type="primary">C2</name>
</gene>
<reference key="1">
    <citation type="journal article" date="2010" name="Plant Physiol.">
        <title>Characterization of {delta}-Guaiene Synthases from Cultured Cells of Aquilaria, Responsible for the Formation of the Sesquiterpenes in Agarwood.</title>
        <authorList>
            <person name="Kumeta Y."/>
            <person name="Ito M."/>
        </authorList>
    </citation>
    <scope>NUCLEOTIDE SEQUENCE [MRNA]</scope>
    <scope>FUNCTION</scope>
    <scope>CATALYTIC ACTIVITY</scope>
    <scope>BIOPHYSICOCHEMICAL PROPERTIES</scope>
    <scope>INDUCTION BY METHYL JASMONATE</scope>
    <scope>3D-STRUCTURE MODELING</scope>
</reference>
<keyword id="KW-0456">Lyase</keyword>
<keyword id="KW-0460">Magnesium</keyword>
<keyword id="KW-0479">Metal-binding</keyword>
<name>DGUS1_AQUCR</name>
<evidence type="ECO:0000250" key="1"/>
<evidence type="ECO:0000269" key="2">
    <source>
    </source>
</evidence>
<evidence type="ECO:0000305" key="3"/>
<accession>D0VMR6</accession>
<sequence length="547" mass="63911">MSSAKLGSASEDVNRRDANYHPTVWGDFFLTHSSNFLENNDSILEKHEELKQEVRNLLVVETSDLPSKIQLTDEIIRLGVGYHFETEIKAQLEKLHDHQLHLNFDLLTTSVWFRLLRGHGFSISSDVFKRFKNTKGEFETEDARTLWCLYEATHLRVDGEDILEEAIQFSRKKLEALLPELSFPLNECVRDALHIPYHRNVQRLAARQYIPQYDAEPTKIESLSLFAKIDFNMLQALHQRELREASRWWKEFDFPSKLPYARDRIAEGYYWMMGAHFEPKFSLSRKFLNRIIGITSLIDDTYDVYGTLEEVTLFTEAVERWDIEAVKDIPKYMQVIYTGMLGIFEDFKDNLINARGKDYCIDYAIEVFKEIVRSYQREAEYFHTGYVPSYDEYMENSIISGGYKMFIILMLIGRGEFELKETLDWASTIPEMVEASSLIARYIDDLQTYKAEEERGETVSAVRCYMREFGVSEEQACKKMREMIEIEWKRLNKTTLEADEISSSVVIPSLNFTRVLEVMYDKGDGYSDSQGVTKDRIAALLRHAIEI</sequence>
<protein>
    <recommendedName>
        <fullName>Delta-guaiene synthase 1</fullName>
        <ecNumber>4.2.3.87</ecNumber>
        <ecNumber>4.2.3.93</ecNumber>
    </recommendedName>
</protein>
<feature type="chain" id="PRO_0000419795" description="Delta-guaiene synthase 1">
    <location>
        <begin position="1"/>
        <end position="547"/>
    </location>
</feature>
<feature type="short sequence motif" description="DDXXD motif">
    <location>
        <begin position="299"/>
        <end position="303"/>
    </location>
</feature>
<feature type="binding site" evidence="1">
    <location>
        <position position="299"/>
    </location>
    <ligand>
        <name>Mg(2+)</name>
        <dbReference type="ChEBI" id="CHEBI:18420"/>
        <label>1</label>
    </ligand>
</feature>
<feature type="binding site" evidence="1">
    <location>
        <position position="299"/>
    </location>
    <ligand>
        <name>Mg(2+)</name>
        <dbReference type="ChEBI" id="CHEBI:18420"/>
        <label>2</label>
    </ligand>
</feature>
<feature type="binding site" evidence="1">
    <location>
        <position position="303"/>
    </location>
    <ligand>
        <name>Mg(2+)</name>
        <dbReference type="ChEBI" id="CHEBI:18420"/>
        <label>1</label>
    </ligand>
</feature>
<feature type="binding site" evidence="1">
    <location>
        <position position="303"/>
    </location>
    <ligand>
        <name>Mg(2+)</name>
        <dbReference type="ChEBI" id="CHEBI:18420"/>
        <label>2</label>
    </ligand>
</feature>
<feature type="binding site" evidence="1">
    <location>
        <position position="444"/>
    </location>
    <ligand>
        <name>Mg(2+)</name>
        <dbReference type="ChEBI" id="CHEBI:18420"/>
        <label>3</label>
    </ligand>
</feature>
<proteinExistence type="evidence at protein level"/>
<organism>
    <name type="scientific">Aquilaria crassna</name>
    <name type="common">Eagle wood</name>
    <dbReference type="NCBI Taxonomy" id="223751"/>
    <lineage>
        <taxon>Eukaryota</taxon>
        <taxon>Viridiplantae</taxon>
        <taxon>Streptophyta</taxon>
        <taxon>Embryophyta</taxon>
        <taxon>Tracheophyta</taxon>
        <taxon>Spermatophyta</taxon>
        <taxon>Magnoliopsida</taxon>
        <taxon>eudicotyledons</taxon>
        <taxon>Gunneridae</taxon>
        <taxon>Pentapetalae</taxon>
        <taxon>rosids</taxon>
        <taxon>malvids</taxon>
        <taxon>Malvales</taxon>
        <taxon>Thymelaeaceae</taxon>
        <taxon>Aquilaria</taxon>
    </lineage>
</organism>